<sequence length="229" mass="26729">MEFSQKLYQAAKPIINDIYEDDFIQKMLSGDIGADALRHYLKADAAYLKEFTNLYALLIPKMNSMNDVKFLVEQIEFMVEGEVLAHDILAQIVGESYEEIIKTKVWPPSGDHYIKHMYFQAHSRENAIYTIAAMAPCPYIYAELAKRSQSDHKLNREKDTAKWFDFYSTEMDDIINVFEALMNKLAESMSDKELEQVKQVFLESCIHERRFFNMAMTLEQWEFGGKVND</sequence>
<gene>
    <name type="primary">tenA</name>
    <name type="ordered locus">MW2017</name>
</gene>
<accession>Q7A0C8</accession>
<keyword id="KW-0378">Hydrolase</keyword>
<keyword id="KW-0784">Thiamine biosynthesis</keyword>
<comment type="function">
    <text evidence="1 2">Catalyzes an amino-pyrimidine hydrolysis reaction at the C5' of the pyrimidine moiety of thiamine compounds, a reaction that is part of a thiamine salvage pathway. Thus, catalyzes the conversion of 4-amino-5-aminomethyl-2-methylpyrimidine to 4-amino-5-hydroxymethyl-2-methylpyrimidine (HMP). Is also able to catalyze the hydrolytic cleavage of thiamine; however, this thiaminase activity may not be physiologically relevant. Therefore, is probably involved in the regeneration of the thiamine pyrimidine from thiamine degraded products present in the environment, rather than in thiamine degradation.</text>
</comment>
<comment type="catalytic activity">
    <reaction evidence="1">
        <text>4-amino-5-aminomethyl-2-methylpyrimidine + H2O = 4-amino-5-hydroxymethyl-2-methylpyrimidine + NH4(+)</text>
        <dbReference type="Rhea" id="RHEA:31799"/>
        <dbReference type="ChEBI" id="CHEBI:15377"/>
        <dbReference type="ChEBI" id="CHEBI:16892"/>
        <dbReference type="ChEBI" id="CHEBI:28938"/>
        <dbReference type="ChEBI" id="CHEBI:63416"/>
        <dbReference type="EC" id="3.5.99.2"/>
    </reaction>
</comment>
<comment type="catalytic activity">
    <reaction evidence="2">
        <text>thiamine + H2O = 5-(2-hydroxyethyl)-4-methylthiazole + 4-amino-5-hydroxymethyl-2-methylpyrimidine + H(+)</text>
        <dbReference type="Rhea" id="RHEA:17509"/>
        <dbReference type="ChEBI" id="CHEBI:15377"/>
        <dbReference type="ChEBI" id="CHEBI:15378"/>
        <dbReference type="ChEBI" id="CHEBI:16892"/>
        <dbReference type="ChEBI" id="CHEBI:17957"/>
        <dbReference type="ChEBI" id="CHEBI:18385"/>
        <dbReference type="EC" id="3.5.99.2"/>
    </reaction>
</comment>
<comment type="pathway">
    <text evidence="1">Cofactor biosynthesis; thiamine diphosphate biosynthesis.</text>
</comment>
<comment type="subunit">
    <text evidence="2">Homotetramer.</text>
</comment>
<comment type="similarity">
    <text evidence="3">Belongs to the TenA family.</text>
</comment>
<name>TENA_STAAW</name>
<proteinExistence type="inferred from homology"/>
<reference key="1">
    <citation type="journal article" date="2002" name="Lancet">
        <title>Genome and virulence determinants of high virulence community-acquired MRSA.</title>
        <authorList>
            <person name="Baba T."/>
            <person name="Takeuchi F."/>
            <person name="Kuroda M."/>
            <person name="Yuzawa H."/>
            <person name="Aoki K."/>
            <person name="Oguchi A."/>
            <person name="Nagai Y."/>
            <person name="Iwama N."/>
            <person name="Asano K."/>
            <person name="Naimi T."/>
            <person name="Kuroda H."/>
            <person name="Cui L."/>
            <person name="Yamamoto K."/>
            <person name="Hiramatsu K."/>
        </authorList>
    </citation>
    <scope>NUCLEOTIDE SEQUENCE [LARGE SCALE GENOMIC DNA]</scope>
    <source>
        <strain>MW2</strain>
    </source>
</reference>
<organism>
    <name type="scientific">Staphylococcus aureus (strain MW2)</name>
    <dbReference type="NCBI Taxonomy" id="196620"/>
    <lineage>
        <taxon>Bacteria</taxon>
        <taxon>Bacillati</taxon>
        <taxon>Bacillota</taxon>
        <taxon>Bacilli</taxon>
        <taxon>Bacillales</taxon>
        <taxon>Staphylococcaceae</taxon>
        <taxon>Staphylococcus</taxon>
    </lineage>
</organism>
<feature type="chain" id="PRO_0000293610" description="Aminopyrimidine aminohydrolase">
    <location>
        <begin position="1"/>
        <end position="229"/>
    </location>
</feature>
<feature type="active site" description="Nucleophile" evidence="1">
    <location>
        <position position="137"/>
    </location>
</feature>
<feature type="active site" description="Proton donor" evidence="1">
    <location>
        <position position="208"/>
    </location>
</feature>
<feature type="binding site" evidence="1">
    <location>
        <position position="44"/>
    </location>
    <ligand>
        <name>substrate</name>
    </ligand>
</feature>
<feature type="binding site" evidence="1">
    <location>
        <position position="141"/>
    </location>
    <ligand>
        <name>substrate</name>
    </ligand>
</feature>
<feature type="binding site" evidence="1">
    <location>
        <position position="167"/>
    </location>
    <ligand>
        <name>substrate</name>
    </ligand>
</feature>
<feature type="site" description="Increases nucleophilicity of active site Cys" evidence="1">
    <location>
        <position position="47"/>
    </location>
</feature>
<protein>
    <recommendedName>
        <fullName evidence="1">Aminopyrimidine aminohydrolase</fullName>
        <ecNumber evidence="2">3.5.99.2</ecNumber>
    </recommendedName>
    <alternativeName>
        <fullName evidence="2">Thiaminase II</fullName>
    </alternativeName>
</protein>
<evidence type="ECO:0000250" key="1">
    <source>
        <dbReference type="UniProtKB" id="P25052"/>
    </source>
</evidence>
<evidence type="ECO:0000250" key="2">
    <source>
        <dbReference type="UniProtKB" id="Q6GEY1"/>
    </source>
</evidence>
<evidence type="ECO:0000305" key="3"/>
<dbReference type="EC" id="3.5.99.2" evidence="2"/>
<dbReference type="EMBL" id="BA000033">
    <property type="protein sequence ID" value="BAB95882.1"/>
    <property type="molecule type" value="Genomic_DNA"/>
</dbReference>
<dbReference type="RefSeq" id="WP_000396077.1">
    <property type="nucleotide sequence ID" value="NC_003923.1"/>
</dbReference>
<dbReference type="SMR" id="Q7A0C8"/>
<dbReference type="KEGG" id="sam:MW2017"/>
<dbReference type="HOGENOM" id="CLU_077537_3_1_9"/>
<dbReference type="UniPathway" id="UPA00060"/>
<dbReference type="GO" id="GO:0005829">
    <property type="term" value="C:cytosol"/>
    <property type="evidence" value="ECO:0007669"/>
    <property type="project" value="TreeGrafter"/>
</dbReference>
<dbReference type="GO" id="GO:0050334">
    <property type="term" value="F:thiaminase activity"/>
    <property type="evidence" value="ECO:0007669"/>
    <property type="project" value="UniProtKB-EC"/>
</dbReference>
<dbReference type="GO" id="GO:0009228">
    <property type="term" value="P:thiamine biosynthetic process"/>
    <property type="evidence" value="ECO:0007669"/>
    <property type="project" value="UniProtKB-KW"/>
</dbReference>
<dbReference type="GO" id="GO:0009229">
    <property type="term" value="P:thiamine diphosphate biosynthetic process"/>
    <property type="evidence" value="ECO:0007669"/>
    <property type="project" value="UniProtKB-UniPathway"/>
</dbReference>
<dbReference type="CDD" id="cd19360">
    <property type="entry name" value="TenA_C_SaTenA-like"/>
    <property type="match status" value="1"/>
</dbReference>
<dbReference type="FunFam" id="1.20.910.10:FF:000010">
    <property type="entry name" value="Aminopyrimidine aminohydrolase"/>
    <property type="match status" value="1"/>
</dbReference>
<dbReference type="Gene3D" id="1.20.910.10">
    <property type="entry name" value="Heme oxygenase-like"/>
    <property type="match status" value="1"/>
</dbReference>
<dbReference type="InterPro" id="IPR016084">
    <property type="entry name" value="Haem_Oase-like_multi-hlx"/>
</dbReference>
<dbReference type="InterPro" id="IPR004305">
    <property type="entry name" value="Thiaminase-2/PQQC"/>
</dbReference>
<dbReference type="InterPro" id="IPR027574">
    <property type="entry name" value="Thiaminase_II"/>
</dbReference>
<dbReference type="InterPro" id="IPR050967">
    <property type="entry name" value="Thiamine_Salvage_TenA"/>
</dbReference>
<dbReference type="NCBIfam" id="TIGR04306">
    <property type="entry name" value="salvage_TenA"/>
    <property type="match status" value="1"/>
</dbReference>
<dbReference type="PANTHER" id="PTHR43198">
    <property type="entry name" value="BIFUNCTIONAL TH2 PROTEIN"/>
    <property type="match status" value="1"/>
</dbReference>
<dbReference type="PANTHER" id="PTHR43198:SF2">
    <property type="entry name" value="SI:CH1073-67J19.1-RELATED"/>
    <property type="match status" value="1"/>
</dbReference>
<dbReference type="Pfam" id="PF03070">
    <property type="entry name" value="TENA_THI-4"/>
    <property type="match status" value="1"/>
</dbReference>
<dbReference type="SUPFAM" id="SSF48613">
    <property type="entry name" value="Heme oxygenase-like"/>
    <property type="match status" value="1"/>
</dbReference>